<sequence length="155" mass="17839">MNKFTNLLIKRTASSLKGGDFRELFRKNYIPITQFEKVLLSVTSCVEGLKNPTDSNSVACITELTSNRALRKLQILMNSTPDGRRIIKNRPLIDSSKYSIKDLMAFPDDSLGRRYGEFLTTYNLEIDRAPVRYVNSEDLAYVLTRFRQVSLNDYK</sequence>
<keyword id="KW-0456">Lyase</keyword>
<keyword id="KW-0472">Membrane</keyword>
<keyword id="KW-0496">Mitochondrion</keyword>
<keyword id="KW-0999">Mitochondrion inner membrane</keyword>
<keyword id="KW-0809">Transit peptide</keyword>
<keyword id="KW-0831">Ubiquinone biosynthesis</keyword>
<feature type="transit peptide" description="Mitochondrion" evidence="2">
    <location>
        <begin position="1"/>
        <end status="unknown"/>
    </location>
</feature>
<feature type="chain" id="PRO_0000388074" description="Ubiquinone biosynthesis protein COQ4 homolog, mitochondrial">
    <location>
        <begin status="unknown"/>
        <end position="155"/>
    </location>
</feature>
<evidence type="ECO:0000250" key="1">
    <source>
        <dbReference type="UniProtKB" id="Q9Y3A0"/>
    </source>
</evidence>
<evidence type="ECO:0000255" key="2"/>
<evidence type="ECO:0000305" key="3"/>
<dbReference type="EC" id="4.1.1.130" evidence="1"/>
<dbReference type="EMBL" id="AAEL01000257">
    <property type="protein sequence ID" value="EAL35992.1"/>
    <property type="molecule type" value="Genomic_DNA"/>
</dbReference>
<dbReference type="RefSeq" id="XP_666228.1">
    <property type="nucleotide sequence ID" value="XM_661136.1"/>
</dbReference>
<dbReference type="SMR" id="Q5CHB0"/>
<dbReference type="GeneID" id="3412928"/>
<dbReference type="KEGG" id="cho:Chro.10049"/>
<dbReference type="VEuPathDB" id="CryptoDB:Chro.10049"/>
<dbReference type="VEuPathDB" id="CryptoDB:ChTU502y2012_302g0190"/>
<dbReference type="VEuPathDB" id="CryptoDB:CHUDEA1_380"/>
<dbReference type="VEuPathDB" id="CryptoDB:GY17_00001035"/>
<dbReference type="UniPathway" id="UPA00232"/>
<dbReference type="GO" id="GO:0005743">
    <property type="term" value="C:mitochondrial inner membrane"/>
    <property type="evidence" value="ECO:0007669"/>
    <property type="project" value="UniProtKB-SubCell"/>
</dbReference>
<dbReference type="GO" id="GO:0006744">
    <property type="term" value="P:ubiquinone biosynthetic process"/>
    <property type="evidence" value="ECO:0007669"/>
    <property type="project" value="UniProtKB-UniPathway"/>
</dbReference>
<dbReference type="InterPro" id="IPR007715">
    <property type="entry name" value="Coq4"/>
</dbReference>
<dbReference type="PANTHER" id="PTHR12922">
    <property type="entry name" value="UBIQUINONE BIOSYNTHESIS PROTEIN"/>
    <property type="match status" value="1"/>
</dbReference>
<dbReference type="PANTHER" id="PTHR12922:SF7">
    <property type="entry name" value="UBIQUINONE BIOSYNTHESIS PROTEIN COQ4 HOMOLOG, MITOCHONDRIAL"/>
    <property type="match status" value="1"/>
</dbReference>
<dbReference type="Pfam" id="PF05019">
    <property type="entry name" value="Coq4"/>
    <property type="match status" value="1"/>
</dbReference>
<organism>
    <name type="scientific">Cryptosporidium hominis</name>
    <dbReference type="NCBI Taxonomy" id="237895"/>
    <lineage>
        <taxon>Eukaryota</taxon>
        <taxon>Sar</taxon>
        <taxon>Alveolata</taxon>
        <taxon>Apicomplexa</taxon>
        <taxon>Conoidasida</taxon>
        <taxon>Coccidia</taxon>
        <taxon>Eucoccidiorida</taxon>
        <taxon>Eimeriorina</taxon>
        <taxon>Cryptosporidiidae</taxon>
        <taxon>Cryptosporidium</taxon>
    </lineage>
</organism>
<proteinExistence type="inferred from homology"/>
<gene>
    <name type="ORF">Chro.10049</name>
</gene>
<accession>Q5CHB0</accession>
<reference key="1">
    <citation type="journal article" date="2004" name="Nature">
        <title>The genome of Cryptosporidium hominis.</title>
        <authorList>
            <person name="Xu P."/>
            <person name="Widmer G."/>
            <person name="Wang Y."/>
            <person name="Ozaki L.S."/>
            <person name="Alves J.M."/>
            <person name="Serrano M.G."/>
            <person name="Puiu D."/>
            <person name="Manque P."/>
            <person name="Akiyoshi D."/>
            <person name="Mackey A.J."/>
            <person name="Pearson W.R."/>
            <person name="Dear P.H."/>
            <person name="Bankier A.T."/>
            <person name="Peterson D.L."/>
            <person name="Abrahamsen M.S."/>
            <person name="Kapur V."/>
            <person name="Tzipori S."/>
            <person name="Buck G.A."/>
        </authorList>
    </citation>
    <scope>NUCLEOTIDE SEQUENCE [LARGE SCALE GENOMIC DNA]</scope>
    <source>
        <strain>TU502</strain>
    </source>
</reference>
<name>COQ4_CRYHO</name>
<protein>
    <recommendedName>
        <fullName>Ubiquinone biosynthesis protein COQ4 homolog, mitochondrial</fullName>
    </recommendedName>
    <alternativeName>
        <fullName>4-hydroxy-3-methoxy-5-polyprenylbenzoate decarboxylase</fullName>
        <ecNumber evidence="1">4.1.1.130</ecNumber>
    </alternativeName>
    <alternativeName>
        <fullName>Coenzyme Q biosynthesis protein 4 homolog</fullName>
    </alternativeName>
</protein>
<comment type="function">
    <text evidence="1">Lyase that catalyzes the C1-decarboxylation of 4-hydroxy-3-methoxy-5-(all-trans-polyprenyl)benzoic acid into 2-methoxy-6-(all-trans-polyprenyl)phenol during ubiquinone biosynthesis.</text>
</comment>
<comment type="catalytic activity">
    <reaction evidence="1">
        <text>a 4-hydroxy-3-methoxy-5-(all-trans-polyprenyl)benzoate + H(+) = a 2-methoxy-6-(all-trans-polyprenyl)phenol + CO2</text>
        <dbReference type="Rhea" id="RHEA:81179"/>
        <dbReference type="Rhea" id="RHEA-COMP:9551"/>
        <dbReference type="Rhea" id="RHEA-COMP:10931"/>
        <dbReference type="ChEBI" id="CHEBI:15378"/>
        <dbReference type="ChEBI" id="CHEBI:16526"/>
        <dbReference type="ChEBI" id="CHEBI:62731"/>
        <dbReference type="ChEBI" id="CHEBI:84443"/>
        <dbReference type="EC" id="4.1.1.130"/>
    </reaction>
</comment>
<comment type="cofactor">
    <cofactor evidence="1">
        <name>Zn(2+)</name>
        <dbReference type="ChEBI" id="CHEBI:29105"/>
    </cofactor>
</comment>
<comment type="pathway">
    <text evidence="1">Cofactor biosynthesis; ubiquinone biosynthesis.</text>
</comment>
<comment type="subunit">
    <text evidence="1">Component of a multi-subunit COQ enzyme complex.</text>
</comment>
<comment type="subcellular location">
    <subcellularLocation>
        <location evidence="1">Mitochondrion inner membrane</location>
        <topology evidence="1">Peripheral membrane protein</topology>
        <orientation evidence="1">Matrix side</orientation>
    </subcellularLocation>
</comment>
<comment type="similarity">
    <text evidence="3">Belongs to the COQ4 family.</text>
</comment>